<organism>
    <name type="scientific">Neisseria meningitidis serogroup B (strain ATCC BAA-335 / MC58)</name>
    <dbReference type="NCBI Taxonomy" id="122586"/>
    <lineage>
        <taxon>Bacteria</taxon>
        <taxon>Pseudomonadati</taxon>
        <taxon>Pseudomonadota</taxon>
        <taxon>Betaproteobacteria</taxon>
        <taxon>Neisseriales</taxon>
        <taxon>Neisseriaceae</taxon>
        <taxon>Neisseria</taxon>
    </lineage>
</organism>
<evidence type="ECO:0000255" key="1">
    <source>
        <dbReference type="HAMAP-Rule" id="MF_01106"/>
    </source>
</evidence>
<reference key="1">
    <citation type="journal article" date="2000" name="Science">
        <title>Complete genome sequence of Neisseria meningitidis serogroup B strain MC58.</title>
        <authorList>
            <person name="Tettelin H."/>
            <person name="Saunders N.J."/>
            <person name="Heidelberg J.F."/>
            <person name="Jeffries A.C."/>
            <person name="Nelson K.E."/>
            <person name="Eisen J.A."/>
            <person name="Ketchum K.A."/>
            <person name="Hood D.W."/>
            <person name="Peden J.F."/>
            <person name="Dodson R.J."/>
            <person name="Nelson W.C."/>
            <person name="Gwinn M.L."/>
            <person name="DeBoy R.T."/>
            <person name="Peterson J.D."/>
            <person name="Hickey E.K."/>
            <person name="Haft D.H."/>
            <person name="Salzberg S.L."/>
            <person name="White O."/>
            <person name="Fleischmann R.D."/>
            <person name="Dougherty B.A."/>
            <person name="Mason T.M."/>
            <person name="Ciecko A."/>
            <person name="Parksey D.S."/>
            <person name="Blair E."/>
            <person name="Cittone H."/>
            <person name="Clark E.B."/>
            <person name="Cotton M.D."/>
            <person name="Utterback T.R."/>
            <person name="Khouri H.M."/>
            <person name="Qin H."/>
            <person name="Vamathevan J.J."/>
            <person name="Gill J."/>
            <person name="Scarlato V."/>
            <person name="Masignani V."/>
            <person name="Pizza M."/>
            <person name="Grandi G."/>
            <person name="Sun L."/>
            <person name="Smith H.O."/>
            <person name="Fraser C.M."/>
            <person name="Moxon E.R."/>
            <person name="Rappuoli R."/>
            <person name="Venter J.C."/>
        </authorList>
    </citation>
    <scope>NUCLEOTIDE SEQUENCE [LARGE SCALE GENOMIC DNA]</scope>
    <source>
        <strain>ATCC BAA-335 / MC58</strain>
    </source>
</reference>
<gene>
    <name evidence="1" type="primary">argJ</name>
    <name type="ordered locus">NMB2005</name>
</gene>
<comment type="function">
    <text evidence="1">Catalyzes two activities which are involved in the cyclic version of arginine biosynthesis: the synthesis of N-acetylglutamate from glutamate and acetyl-CoA as the acetyl donor, and of ornithine by transacetylation between N(2)-acetylornithine and glutamate.</text>
</comment>
<comment type="catalytic activity">
    <reaction evidence="1">
        <text>N(2)-acetyl-L-ornithine + L-glutamate = N-acetyl-L-glutamate + L-ornithine</text>
        <dbReference type="Rhea" id="RHEA:15349"/>
        <dbReference type="ChEBI" id="CHEBI:29985"/>
        <dbReference type="ChEBI" id="CHEBI:44337"/>
        <dbReference type="ChEBI" id="CHEBI:46911"/>
        <dbReference type="ChEBI" id="CHEBI:57805"/>
        <dbReference type="EC" id="2.3.1.35"/>
    </reaction>
</comment>
<comment type="catalytic activity">
    <reaction evidence="1">
        <text>L-glutamate + acetyl-CoA = N-acetyl-L-glutamate + CoA + H(+)</text>
        <dbReference type="Rhea" id="RHEA:24292"/>
        <dbReference type="ChEBI" id="CHEBI:15378"/>
        <dbReference type="ChEBI" id="CHEBI:29985"/>
        <dbReference type="ChEBI" id="CHEBI:44337"/>
        <dbReference type="ChEBI" id="CHEBI:57287"/>
        <dbReference type="ChEBI" id="CHEBI:57288"/>
        <dbReference type="EC" id="2.3.1.1"/>
    </reaction>
</comment>
<comment type="pathway">
    <text evidence="1">Amino-acid biosynthesis; L-arginine biosynthesis; L-ornithine and N-acetyl-L-glutamate from L-glutamate and N(2)-acetyl-L-ornithine (cyclic): step 1/1.</text>
</comment>
<comment type="pathway">
    <text evidence="1">Amino-acid biosynthesis; L-arginine biosynthesis; N(2)-acetyl-L-ornithine from L-glutamate: step 1/4.</text>
</comment>
<comment type="subunit">
    <text evidence="1">Heterotetramer of two alpha and two beta chains.</text>
</comment>
<comment type="subcellular location">
    <subcellularLocation>
        <location evidence="1">Cytoplasm</location>
    </subcellularLocation>
</comment>
<comment type="similarity">
    <text evidence="1">Belongs to the ArgJ family.</text>
</comment>
<sequence>MAVNLTEKTAEQLPDIDGIALYTAQAGVKKPGHTDLTLIAVAAGSTVGAVFTTNRFCAAPVHIAKSHLFDEDGVRALVINTGNANAGTGAQGRIDALAVCAAAARQIGCKPNQVLPFSTGVILEPLPADKIIAALPKMQPAFWNEAARAIMTTDTVPKAASREGKVGDKHTVRATGIAKGSGMIHPNMATMLGFIATDAKVSQPVLQLMTQEIADETFNTITVDGDTSTNDSFVIIATGKNSQSEIDNIADPRYAQLKELLCSLALELAQAIVRDGEGATKFITVRVENAKTRDEARQAAYAVARSPLVKTAFFASDPNLGRLLAAIGYAGVADLDTDLVEMYLDDILVAEHGGRAASYTEAQGQAVMSKAEITVRIKLHRGQAAATVYTCDLSHGYVSINADYRS</sequence>
<dbReference type="EC" id="2.3.1.35" evidence="1"/>
<dbReference type="EC" id="2.3.1.1" evidence="1"/>
<dbReference type="EMBL" id="AE002098">
    <property type="protein sequence ID" value="AAF42332.1"/>
    <property type="molecule type" value="Genomic_DNA"/>
</dbReference>
<dbReference type="PIR" id="C81017">
    <property type="entry name" value="C81017"/>
</dbReference>
<dbReference type="RefSeq" id="NP_274997.1">
    <property type="nucleotide sequence ID" value="NC_003112.2"/>
</dbReference>
<dbReference type="RefSeq" id="WP_002235259.1">
    <property type="nucleotide sequence ID" value="NC_003112.2"/>
</dbReference>
<dbReference type="SMR" id="P63574"/>
<dbReference type="STRING" id="122586.NMB2005"/>
<dbReference type="MEROPS" id="T05.001"/>
<dbReference type="PaxDb" id="122586-NMB2005"/>
<dbReference type="GeneID" id="93386921"/>
<dbReference type="KEGG" id="nme:NMB2005"/>
<dbReference type="PATRIC" id="fig|122586.8.peg.2559"/>
<dbReference type="HOGENOM" id="CLU_027172_1_0_4"/>
<dbReference type="InParanoid" id="P63574"/>
<dbReference type="OrthoDB" id="9804242at2"/>
<dbReference type="UniPathway" id="UPA00068">
    <property type="reaction ID" value="UER00106"/>
</dbReference>
<dbReference type="UniPathway" id="UPA00068">
    <property type="reaction ID" value="UER00111"/>
</dbReference>
<dbReference type="Proteomes" id="UP000000425">
    <property type="component" value="Chromosome"/>
</dbReference>
<dbReference type="GO" id="GO:0005737">
    <property type="term" value="C:cytoplasm"/>
    <property type="evidence" value="ECO:0007669"/>
    <property type="project" value="UniProtKB-SubCell"/>
</dbReference>
<dbReference type="GO" id="GO:0004358">
    <property type="term" value="F:glutamate N-acetyltransferase activity"/>
    <property type="evidence" value="ECO:0007669"/>
    <property type="project" value="UniProtKB-UniRule"/>
</dbReference>
<dbReference type="GO" id="GO:0004042">
    <property type="term" value="F:L-glutamate N-acetyltransferase activity"/>
    <property type="evidence" value="ECO:0000318"/>
    <property type="project" value="GO_Central"/>
</dbReference>
<dbReference type="GO" id="GO:0006526">
    <property type="term" value="P:L-arginine biosynthetic process"/>
    <property type="evidence" value="ECO:0007669"/>
    <property type="project" value="UniProtKB-UniRule"/>
</dbReference>
<dbReference type="GO" id="GO:0006592">
    <property type="term" value="P:ornithine biosynthetic process"/>
    <property type="evidence" value="ECO:0000318"/>
    <property type="project" value="GO_Central"/>
</dbReference>
<dbReference type="CDD" id="cd02152">
    <property type="entry name" value="OAT"/>
    <property type="match status" value="1"/>
</dbReference>
<dbReference type="FunFam" id="3.10.20.340:FF:000001">
    <property type="entry name" value="Arginine biosynthesis bifunctional protein ArgJ, chloroplastic"/>
    <property type="match status" value="1"/>
</dbReference>
<dbReference type="FunFam" id="3.60.70.12:FF:000001">
    <property type="entry name" value="Arginine biosynthesis bifunctional protein ArgJ, chloroplastic"/>
    <property type="match status" value="1"/>
</dbReference>
<dbReference type="Gene3D" id="3.10.20.340">
    <property type="entry name" value="ArgJ beta chain, C-terminal domain"/>
    <property type="match status" value="1"/>
</dbReference>
<dbReference type="Gene3D" id="3.60.70.12">
    <property type="entry name" value="L-amino peptidase D-ALA esterase/amidase"/>
    <property type="match status" value="1"/>
</dbReference>
<dbReference type="HAMAP" id="MF_01106">
    <property type="entry name" value="ArgJ"/>
    <property type="match status" value="1"/>
</dbReference>
<dbReference type="InterPro" id="IPR002813">
    <property type="entry name" value="Arg_biosynth_ArgJ"/>
</dbReference>
<dbReference type="InterPro" id="IPR016117">
    <property type="entry name" value="ArgJ-like_dom_sf"/>
</dbReference>
<dbReference type="InterPro" id="IPR042195">
    <property type="entry name" value="ArgJ_beta_C"/>
</dbReference>
<dbReference type="NCBIfam" id="TIGR00120">
    <property type="entry name" value="ArgJ"/>
    <property type="match status" value="1"/>
</dbReference>
<dbReference type="NCBIfam" id="NF003802">
    <property type="entry name" value="PRK05388.1"/>
    <property type="match status" value="1"/>
</dbReference>
<dbReference type="PANTHER" id="PTHR23100">
    <property type="entry name" value="ARGININE BIOSYNTHESIS BIFUNCTIONAL PROTEIN ARGJ"/>
    <property type="match status" value="1"/>
</dbReference>
<dbReference type="PANTHER" id="PTHR23100:SF0">
    <property type="entry name" value="ARGININE BIOSYNTHESIS BIFUNCTIONAL PROTEIN ARGJ, MITOCHONDRIAL"/>
    <property type="match status" value="1"/>
</dbReference>
<dbReference type="Pfam" id="PF01960">
    <property type="entry name" value="ArgJ"/>
    <property type="match status" value="1"/>
</dbReference>
<dbReference type="SUPFAM" id="SSF56266">
    <property type="entry name" value="DmpA/ArgJ-like"/>
    <property type="match status" value="1"/>
</dbReference>
<name>ARGJ_NEIMB</name>
<feature type="chain" id="PRO_0000002201" description="Arginine biosynthesis bifunctional protein ArgJ alpha chain" evidence="1">
    <location>
        <begin position="1"/>
        <end position="189"/>
    </location>
</feature>
<feature type="chain" id="PRO_0000002202" description="Arginine biosynthesis bifunctional protein ArgJ beta chain" evidence="1">
    <location>
        <begin position="190"/>
        <end position="406"/>
    </location>
</feature>
<feature type="active site" description="Nucleophile" evidence="1">
    <location>
        <position position="190"/>
    </location>
</feature>
<feature type="binding site" evidence="1">
    <location>
        <position position="152"/>
    </location>
    <ligand>
        <name>substrate</name>
    </ligand>
</feature>
<feature type="binding site" evidence="1">
    <location>
        <position position="179"/>
    </location>
    <ligand>
        <name>substrate</name>
    </ligand>
</feature>
<feature type="binding site" evidence="1">
    <location>
        <position position="190"/>
    </location>
    <ligand>
        <name>substrate</name>
    </ligand>
</feature>
<feature type="binding site" evidence="1">
    <location>
        <position position="277"/>
    </location>
    <ligand>
        <name>substrate</name>
    </ligand>
</feature>
<feature type="binding site" evidence="1">
    <location>
        <position position="401"/>
    </location>
    <ligand>
        <name>substrate</name>
    </ligand>
</feature>
<feature type="binding site" evidence="1">
    <location>
        <position position="406"/>
    </location>
    <ligand>
        <name>substrate</name>
    </ligand>
</feature>
<feature type="site" description="Involved in the stabilization of negative charge on the oxyanion by the formation of the oxyanion hole" evidence="1">
    <location>
        <position position="119"/>
    </location>
</feature>
<feature type="site" description="Involved in the stabilization of negative charge on the oxyanion by the formation of the oxyanion hole" evidence="1">
    <location>
        <position position="120"/>
    </location>
</feature>
<feature type="site" description="Cleavage; by autolysis" evidence="1">
    <location>
        <begin position="189"/>
        <end position="190"/>
    </location>
</feature>
<proteinExistence type="inferred from homology"/>
<protein>
    <recommendedName>
        <fullName evidence="1">Arginine biosynthesis bifunctional protein ArgJ</fullName>
    </recommendedName>
    <domain>
        <recommendedName>
            <fullName evidence="1">Glutamate N-acetyltransferase</fullName>
            <ecNumber evidence="1">2.3.1.35</ecNumber>
        </recommendedName>
        <alternativeName>
            <fullName evidence="1">Ornithine acetyltransferase</fullName>
            <shortName evidence="1">OATase</shortName>
        </alternativeName>
        <alternativeName>
            <fullName evidence="1">Ornithine transacetylase</fullName>
        </alternativeName>
    </domain>
    <domain>
        <recommendedName>
            <fullName evidence="1">Amino-acid acetyltransferase</fullName>
            <ecNumber evidence="1">2.3.1.1</ecNumber>
        </recommendedName>
        <alternativeName>
            <fullName evidence="1">N-acetylglutamate synthase</fullName>
            <shortName evidence="1">AGSase</shortName>
        </alternativeName>
    </domain>
    <component>
        <recommendedName>
            <fullName evidence="1">Arginine biosynthesis bifunctional protein ArgJ alpha chain</fullName>
        </recommendedName>
    </component>
    <component>
        <recommendedName>
            <fullName evidence="1">Arginine biosynthesis bifunctional protein ArgJ beta chain</fullName>
        </recommendedName>
    </component>
</protein>
<keyword id="KW-0012">Acyltransferase</keyword>
<keyword id="KW-0028">Amino-acid biosynthesis</keyword>
<keyword id="KW-0055">Arginine biosynthesis</keyword>
<keyword id="KW-0068">Autocatalytic cleavage</keyword>
<keyword id="KW-0963">Cytoplasm</keyword>
<keyword id="KW-0511">Multifunctional enzyme</keyword>
<keyword id="KW-1185">Reference proteome</keyword>
<keyword id="KW-0808">Transferase</keyword>
<accession>P63574</accession>
<accession>Q9JRJ2</accession>